<sequence>MATAVAGPEIERLIQLLARLPGLGPRSARRAALHLIKKRDALMTPLASALQVAIDKIEVCKSCGNIDTRNPCTVCTDPRRDPSIIVVVADVADLWALERASATNGRYHVLGATLSPLDGVGPDDLTIDALVARAHDPAVSEIILALNATVDGQTTAHYVTDLLQEAGVKVTRLAHGVPVGGELDYLDEGTLSAAMRQRTLF</sequence>
<dbReference type="EMBL" id="CP000283">
    <property type="protein sequence ID" value="ABE37325.1"/>
    <property type="molecule type" value="Genomic_DNA"/>
</dbReference>
<dbReference type="SMR" id="Q13F14"/>
<dbReference type="STRING" id="316057.RPD_0085"/>
<dbReference type="KEGG" id="rpd:RPD_0085"/>
<dbReference type="eggNOG" id="COG0353">
    <property type="taxonomic scope" value="Bacteria"/>
</dbReference>
<dbReference type="HOGENOM" id="CLU_060739_1_1_5"/>
<dbReference type="BioCyc" id="RPAL316057:RPD_RS00425-MONOMER"/>
<dbReference type="Proteomes" id="UP000001818">
    <property type="component" value="Chromosome"/>
</dbReference>
<dbReference type="GO" id="GO:0003677">
    <property type="term" value="F:DNA binding"/>
    <property type="evidence" value="ECO:0007669"/>
    <property type="project" value="UniProtKB-UniRule"/>
</dbReference>
<dbReference type="GO" id="GO:0008270">
    <property type="term" value="F:zinc ion binding"/>
    <property type="evidence" value="ECO:0007669"/>
    <property type="project" value="UniProtKB-KW"/>
</dbReference>
<dbReference type="GO" id="GO:0006310">
    <property type="term" value="P:DNA recombination"/>
    <property type="evidence" value="ECO:0007669"/>
    <property type="project" value="UniProtKB-UniRule"/>
</dbReference>
<dbReference type="GO" id="GO:0006281">
    <property type="term" value="P:DNA repair"/>
    <property type="evidence" value="ECO:0007669"/>
    <property type="project" value="UniProtKB-UniRule"/>
</dbReference>
<dbReference type="CDD" id="cd01025">
    <property type="entry name" value="TOPRIM_recR"/>
    <property type="match status" value="1"/>
</dbReference>
<dbReference type="Gene3D" id="3.40.1360.10">
    <property type="match status" value="1"/>
</dbReference>
<dbReference type="Gene3D" id="6.10.250.240">
    <property type="match status" value="1"/>
</dbReference>
<dbReference type="Gene3D" id="1.10.8.420">
    <property type="entry name" value="RecR Domain 1"/>
    <property type="match status" value="1"/>
</dbReference>
<dbReference type="HAMAP" id="MF_00017">
    <property type="entry name" value="RecR"/>
    <property type="match status" value="1"/>
</dbReference>
<dbReference type="InterPro" id="IPR000093">
    <property type="entry name" value="DNA_Rcmb_RecR"/>
</dbReference>
<dbReference type="InterPro" id="IPR023627">
    <property type="entry name" value="Rcmb_RecR"/>
</dbReference>
<dbReference type="InterPro" id="IPR015967">
    <property type="entry name" value="Rcmb_RecR_Znf"/>
</dbReference>
<dbReference type="InterPro" id="IPR006171">
    <property type="entry name" value="TOPRIM_dom"/>
</dbReference>
<dbReference type="InterPro" id="IPR034137">
    <property type="entry name" value="TOPRIM_RecR"/>
</dbReference>
<dbReference type="NCBIfam" id="TIGR00615">
    <property type="entry name" value="recR"/>
    <property type="match status" value="1"/>
</dbReference>
<dbReference type="PANTHER" id="PTHR30446">
    <property type="entry name" value="RECOMBINATION PROTEIN RECR"/>
    <property type="match status" value="1"/>
</dbReference>
<dbReference type="PANTHER" id="PTHR30446:SF0">
    <property type="entry name" value="RECOMBINATION PROTEIN RECR"/>
    <property type="match status" value="1"/>
</dbReference>
<dbReference type="Pfam" id="PF21175">
    <property type="entry name" value="RecR_C"/>
    <property type="match status" value="1"/>
</dbReference>
<dbReference type="Pfam" id="PF21176">
    <property type="entry name" value="RecR_HhH"/>
    <property type="match status" value="1"/>
</dbReference>
<dbReference type="Pfam" id="PF13662">
    <property type="entry name" value="Toprim_4"/>
    <property type="match status" value="1"/>
</dbReference>
<dbReference type="SMART" id="SM00493">
    <property type="entry name" value="TOPRIM"/>
    <property type="match status" value="1"/>
</dbReference>
<dbReference type="SUPFAM" id="SSF111304">
    <property type="entry name" value="Recombination protein RecR"/>
    <property type="match status" value="1"/>
</dbReference>
<dbReference type="PROSITE" id="PS01300">
    <property type="entry name" value="RECR"/>
    <property type="match status" value="1"/>
</dbReference>
<dbReference type="PROSITE" id="PS50880">
    <property type="entry name" value="TOPRIM"/>
    <property type="match status" value="1"/>
</dbReference>
<organism>
    <name type="scientific">Rhodopseudomonas palustris (strain BisB5)</name>
    <dbReference type="NCBI Taxonomy" id="316057"/>
    <lineage>
        <taxon>Bacteria</taxon>
        <taxon>Pseudomonadati</taxon>
        <taxon>Pseudomonadota</taxon>
        <taxon>Alphaproteobacteria</taxon>
        <taxon>Hyphomicrobiales</taxon>
        <taxon>Nitrobacteraceae</taxon>
        <taxon>Rhodopseudomonas</taxon>
    </lineage>
</organism>
<name>RECR_RHOPS</name>
<gene>
    <name evidence="1" type="primary">recR</name>
    <name type="ordered locus">RPD_0085</name>
</gene>
<evidence type="ECO:0000255" key="1">
    <source>
        <dbReference type="HAMAP-Rule" id="MF_00017"/>
    </source>
</evidence>
<feature type="chain" id="PRO_1000001594" description="Recombination protein RecR">
    <location>
        <begin position="1"/>
        <end position="201"/>
    </location>
</feature>
<feature type="domain" description="Toprim" evidence="1">
    <location>
        <begin position="83"/>
        <end position="178"/>
    </location>
</feature>
<feature type="zinc finger region" description="C4-type" evidence="1">
    <location>
        <begin position="60"/>
        <end position="75"/>
    </location>
</feature>
<protein>
    <recommendedName>
        <fullName evidence="1">Recombination protein RecR</fullName>
    </recommendedName>
</protein>
<comment type="function">
    <text evidence="1">May play a role in DNA repair. It seems to be involved in an RecBC-independent recombinational process of DNA repair. It may act with RecF and RecO.</text>
</comment>
<comment type="similarity">
    <text evidence="1">Belongs to the RecR family.</text>
</comment>
<proteinExistence type="inferred from homology"/>
<keyword id="KW-0227">DNA damage</keyword>
<keyword id="KW-0233">DNA recombination</keyword>
<keyword id="KW-0234">DNA repair</keyword>
<keyword id="KW-0479">Metal-binding</keyword>
<keyword id="KW-0862">Zinc</keyword>
<keyword id="KW-0863">Zinc-finger</keyword>
<accession>Q13F14</accession>
<reference key="1">
    <citation type="submission" date="2006-03" db="EMBL/GenBank/DDBJ databases">
        <title>Complete sequence of Rhodopseudomonas palustris BisB5.</title>
        <authorList>
            <consortium name="US DOE Joint Genome Institute"/>
            <person name="Copeland A."/>
            <person name="Lucas S."/>
            <person name="Lapidus A."/>
            <person name="Barry K."/>
            <person name="Detter J.C."/>
            <person name="Glavina del Rio T."/>
            <person name="Hammon N."/>
            <person name="Israni S."/>
            <person name="Dalin E."/>
            <person name="Tice H."/>
            <person name="Pitluck S."/>
            <person name="Chain P."/>
            <person name="Malfatti S."/>
            <person name="Shin M."/>
            <person name="Vergez L."/>
            <person name="Schmutz J."/>
            <person name="Larimer F."/>
            <person name="Land M."/>
            <person name="Hauser L."/>
            <person name="Pelletier D.A."/>
            <person name="Kyrpides N."/>
            <person name="Lykidis A."/>
            <person name="Oda Y."/>
            <person name="Harwood C.S."/>
            <person name="Richardson P."/>
        </authorList>
    </citation>
    <scope>NUCLEOTIDE SEQUENCE [LARGE SCALE GENOMIC DNA]</scope>
    <source>
        <strain>BisB5</strain>
    </source>
</reference>